<name>CSM6_ENTI1</name>
<comment type="function">
    <text evidence="2 3">CRISPR (clustered regularly interspaced short palindromic repeat) is an adaptive immune system that provides protection against mobile genetic elements (viruses, transposable elements and conjugative plasmids). CRISPR clusters contain spacers, sequences complementary to antecedent mobile elements, and target invading nucleic acids. CRISPR clusters are transcribed and processed into CRISPR RNA (crRNA) (Probable). The type III-A Csm effector complex binds crRNA and acts as a crRNA-guided RNase, DNase and cyclic oligoadenylate synthase; binding of target RNA cognate to the crRNA is required for all activities. In a heterologous host the appropriately targeted Csm effector complex prevents growth of dsDNA phage phiNM1-gamma6. This protein is not part of the Csm effector complex (PubMed:28722012).</text>
</comment>
<comment type="function">
    <text evidence="2">A single-strand-specific endoribonuclease (ssRNase) (PubMed:28722012). Activity is stimulated by cyclic oligoadenylates (cOA); maximal stimulation is seen with cyclic hexaadenylate (cA6) (PubMed:28722012).</text>
</comment>
<comment type="activity regulation">
    <text evidence="2">Non-specific ssRNase activity is allosterically activated by cyclic hexaadenylate (cA6) binding to its CARF domain. cA6 is a second messenger produced by Cas10 of the ternary Csm effector complex in the presence of a cognate target RNA.</text>
</comment>
<comment type="subunit">
    <text evidence="1">Homodimer; the composite ssRNase active site is formed at the dimer interface.</text>
</comment>
<comment type="domain">
    <text evidence="1">The N-terminal CRISPR-associated Rossman fold (CARF) probably binds the cA6 effector. ssRNase activity resides in the C-terminal HEPN domain.</text>
</comment>
<comment type="miscellaneous">
    <text evidence="4">Encoded in a type III-A CRISPR locus.</text>
</comment>
<comment type="similarity">
    <text evidence="3">Belongs to the CRISPR-associated Csm6 family.</text>
</comment>
<sequence length="430" mass="50627">MKILFSPIGNTDPWRNDRDGAMLHIVRHYQPDRVVLFFTESIWQGNQHFSGQQAFDWVKIIQSINENCQIEIKCDTIEVENDFDAYKDLFHQYLVEEKRKYPNAEIFLNVTSGTPQMETTLCLEYVTYPDKMRCIQVSTPLKTSNAKTKYAQADCQEVDLEIVNEEESQQPSRCHKIAILSFREAIVRNQIKSLLDNYDYEAALQLVASQKSFRNGKEIRKKLKELIDDIKMHRVFSYLIKQYPRNEKLQKALLHTILLEMRHQRGDIAETLIRVKSIAEYIVEQYIQKNYPYLIIYKEDKPYFNVSYSQELTESYLALMDSRNKKTNKKMTVDSLDRILGFPAYRDFLQLLEASNEMTNEMNKVNEINNLRNKVAHNLDSLNLDRDKNGRKITNAVTAVRTMLLAVFPEVQENDFHYLKQFNQSIKELL</sequence>
<evidence type="ECO:0000250" key="1">
    <source>
        <dbReference type="UniProtKB" id="Q53W17"/>
    </source>
</evidence>
<evidence type="ECO:0000269" key="2">
    <source>
    </source>
</evidence>
<evidence type="ECO:0000305" key="3"/>
<evidence type="ECO:0000305" key="4">
    <source>
    </source>
</evidence>
<evidence type="ECO:0007829" key="5">
    <source>
        <dbReference type="PDB" id="6TUG"/>
    </source>
</evidence>
<organism>
    <name type="scientific">Enterococcus italicus (strain DSM 15952 / CCUG 50447 / LMG 22039 / TP 1.5)</name>
    <dbReference type="NCBI Taxonomy" id="888064"/>
    <lineage>
        <taxon>Bacteria</taxon>
        <taxon>Bacillati</taxon>
        <taxon>Bacillota</taxon>
        <taxon>Bacilli</taxon>
        <taxon>Lactobacillales</taxon>
        <taxon>Enterococcaceae</taxon>
        <taxon>Enterococcus</taxon>
    </lineage>
</organism>
<feature type="chain" id="PRO_0000446125" description="CRISPR system endoribonuclease Csm6">
    <location>
        <begin position="1"/>
        <end position="430"/>
    </location>
</feature>
<feature type="region of interest" description="CARF domain" evidence="4">
    <location>
        <begin position="1"/>
        <end position="155"/>
    </location>
</feature>
<feature type="region of interest" description="HEPN domain" evidence="4">
    <location>
        <begin position="156"/>
        <end position="430"/>
    </location>
</feature>
<feature type="mutagenesis site" description="Loss of ssRNase activity in the presence or absence of activator. Does not protect against phage infection in a heterologous host." evidence="2">
    <original>Q</original>
    <variation>A</variation>
    <location>
        <position position="116"/>
    </location>
</feature>
<feature type="mutagenesis site" description="Loss of ssRNase activity in the presence or absence of activator. Does not protect against phage infection in a heterologous host." evidence="2">
    <original>RN</original>
    <variation>AA</variation>
    <location>
        <begin position="372"/>
        <end position="373"/>
    </location>
</feature>
<feature type="strand" evidence="5">
    <location>
        <begin position="2"/>
        <end position="7"/>
    </location>
</feature>
<feature type="strand" evidence="5">
    <location>
        <begin position="13"/>
        <end position="15"/>
    </location>
</feature>
<feature type="helix" evidence="5">
    <location>
        <begin position="21"/>
        <end position="29"/>
    </location>
</feature>
<feature type="strand" evidence="5">
    <location>
        <begin position="32"/>
        <end position="39"/>
    </location>
</feature>
<feature type="helix" evidence="5">
    <location>
        <begin position="40"/>
        <end position="44"/>
    </location>
</feature>
<feature type="strand" evidence="5">
    <location>
        <begin position="47"/>
        <end position="49"/>
    </location>
</feature>
<feature type="helix" evidence="5">
    <location>
        <begin position="52"/>
        <end position="54"/>
    </location>
</feature>
<feature type="helix" evidence="5">
    <location>
        <begin position="57"/>
        <end position="64"/>
    </location>
</feature>
<feature type="strand" evidence="5">
    <location>
        <begin position="69"/>
        <end position="75"/>
    </location>
</feature>
<feature type="helix" evidence="5">
    <location>
        <begin position="84"/>
        <end position="100"/>
    </location>
</feature>
<feature type="strand" evidence="5">
    <location>
        <begin position="105"/>
        <end position="113"/>
    </location>
</feature>
<feature type="helix" evidence="5">
    <location>
        <begin position="115"/>
        <end position="127"/>
    </location>
</feature>
<feature type="strand" evidence="5">
    <location>
        <begin position="132"/>
        <end position="137"/>
    </location>
</feature>
<feature type="helix" evidence="5">
    <location>
        <begin position="156"/>
        <end position="168"/>
    </location>
</feature>
<feature type="strand" evidence="5">
    <location>
        <begin position="174"/>
        <end position="176"/>
    </location>
</feature>
<feature type="helix" evidence="5">
    <location>
        <begin position="180"/>
        <end position="196"/>
    </location>
</feature>
<feature type="helix" evidence="5">
    <location>
        <begin position="200"/>
        <end position="209"/>
    </location>
</feature>
<feature type="helix" evidence="5">
    <location>
        <begin position="216"/>
        <end position="232"/>
    </location>
</feature>
<feature type="helix" evidence="5">
    <location>
        <begin position="237"/>
        <end position="242"/>
    </location>
</feature>
<feature type="helix" evidence="5">
    <location>
        <begin position="247"/>
        <end position="265"/>
    </location>
</feature>
<feature type="helix" evidence="5">
    <location>
        <begin position="268"/>
        <end position="290"/>
    </location>
</feature>
<feature type="helix" evidence="5">
    <location>
        <begin position="292"/>
        <end position="294"/>
    </location>
</feature>
<feature type="strand" evidence="5">
    <location>
        <begin position="298"/>
        <end position="301"/>
    </location>
</feature>
<feature type="helix" evidence="5">
    <location>
        <begin position="310"/>
        <end position="321"/>
    </location>
</feature>
<feature type="turn" evidence="5">
    <location>
        <begin position="333"/>
        <end position="335"/>
    </location>
</feature>
<feature type="helix" evidence="5">
    <location>
        <begin position="342"/>
        <end position="352"/>
    </location>
</feature>
<feature type="helix" evidence="5">
    <location>
        <begin position="357"/>
        <end position="367"/>
    </location>
</feature>
<feature type="helix" evidence="5">
    <location>
        <begin position="369"/>
        <end position="377"/>
    </location>
</feature>
<feature type="helix" evidence="5">
    <location>
        <begin position="386"/>
        <end position="388"/>
    </location>
</feature>
<feature type="helix" evidence="5">
    <location>
        <begin position="389"/>
        <end position="407"/>
    </location>
</feature>
<feature type="helix" evidence="5">
    <location>
        <begin position="413"/>
        <end position="417"/>
    </location>
</feature>
<feature type="helix" evidence="5">
    <location>
        <begin position="418"/>
        <end position="429"/>
    </location>
</feature>
<keyword id="KW-0002">3D-structure</keyword>
<keyword id="KW-0051">Antiviral defense</keyword>
<keyword id="KW-0255">Endonuclease</keyword>
<keyword id="KW-0378">Hydrolase</keyword>
<keyword id="KW-0540">Nuclease</keyword>
<keyword id="KW-1185">Reference proteome</keyword>
<proteinExistence type="evidence at protein level"/>
<gene>
    <name type="primary">csm6</name>
    <name type="ORF">HMPREF9088_1942</name>
</gene>
<dbReference type="EC" id="3.1.-.-" evidence="2"/>
<dbReference type="EMBL" id="AEPV01000074">
    <property type="protein sequence ID" value="EFU73212.1"/>
    <property type="molecule type" value="Genomic_DNA"/>
</dbReference>
<dbReference type="RefSeq" id="WP_007208953.1">
    <property type="nucleotide sequence ID" value="NZ_GL622241.1"/>
</dbReference>
<dbReference type="PDB" id="6TUG">
    <property type="method" value="X-ray"/>
    <property type="resolution" value="2.42 A"/>
    <property type="chains" value="A/B/C/D/E/F/G/H=1-430"/>
</dbReference>
<dbReference type="PDBsum" id="6TUG"/>
<dbReference type="SMR" id="E6LHV2"/>
<dbReference type="STRING" id="888064.HMPREF9088_1942"/>
<dbReference type="PATRIC" id="fig|888064.11.peg.2080"/>
<dbReference type="eggNOG" id="ENOG502Z9RR">
    <property type="taxonomic scope" value="Bacteria"/>
</dbReference>
<dbReference type="HOGENOM" id="CLU_047385_3_0_9"/>
<dbReference type="OrthoDB" id="5243123at2"/>
<dbReference type="Proteomes" id="UP000010296">
    <property type="component" value="Unassembled WGS sequence"/>
</dbReference>
<dbReference type="GO" id="GO:0004519">
    <property type="term" value="F:endonuclease activity"/>
    <property type="evidence" value="ECO:0007669"/>
    <property type="project" value="UniProtKB-KW"/>
</dbReference>
<dbReference type="GO" id="GO:0051607">
    <property type="term" value="P:defense response to virus"/>
    <property type="evidence" value="ECO:0007669"/>
    <property type="project" value="UniProtKB-KW"/>
</dbReference>
<dbReference type="InterPro" id="IPR013489">
    <property type="entry name" value="CRISPR-assoc_prot_Csm6"/>
</dbReference>
<dbReference type="InterPro" id="IPR053955">
    <property type="entry name" value="Csm6_CARF"/>
</dbReference>
<dbReference type="InterPro" id="IPR053941">
    <property type="entry name" value="Csm6_HEPN"/>
</dbReference>
<dbReference type="NCBIfam" id="TIGR02672">
    <property type="entry name" value="cas_csm6"/>
    <property type="match status" value="1"/>
</dbReference>
<dbReference type="Pfam" id="PF22206">
    <property type="entry name" value="Cas_Csm6_6H"/>
    <property type="match status" value="1"/>
</dbReference>
<dbReference type="Pfam" id="PF22208">
    <property type="entry name" value="Cas_Csm6_CARF"/>
    <property type="match status" value="1"/>
</dbReference>
<dbReference type="Pfam" id="PF09659">
    <property type="entry name" value="Cas_Csm6_HEPN"/>
    <property type="match status" value="1"/>
</dbReference>
<accession>E6LHV2</accession>
<reference key="1">
    <citation type="submission" date="2010-12" db="EMBL/GenBank/DDBJ databases">
        <authorList>
            <person name="Muzny D."/>
            <person name="Qin X."/>
            <person name="Deng J."/>
            <person name="Jiang H."/>
            <person name="Liu Y."/>
            <person name="Qu J."/>
            <person name="Song X.-Z."/>
            <person name="Zhang L."/>
            <person name="Thornton R."/>
            <person name="Coyle M."/>
            <person name="Francisco L."/>
            <person name="Jackson L."/>
            <person name="Javaid M."/>
            <person name="Korchina V."/>
            <person name="Kovar C."/>
            <person name="Mata R."/>
            <person name="Mathew T."/>
            <person name="Ngo R."/>
            <person name="Nguyen L."/>
            <person name="Nguyen N."/>
            <person name="Okwuonu G."/>
            <person name="Ongeri F."/>
            <person name="Pham C."/>
            <person name="Simmons D."/>
            <person name="Wilczek-Boney K."/>
            <person name="Hale W."/>
            <person name="Jakkamsetti A."/>
            <person name="Pham P."/>
            <person name="Ruth R."/>
            <person name="San Lucas F."/>
            <person name="Warren J."/>
            <person name="Zhang J."/>
            <person name="Zhao Z."/>
            <person name="Zhou C."/>
            <person name="Zhu D."/>
            <person name="Lee S."/>
            <person name="Bess C."/>
            <person name="Blankenburg K."/>
            <person name="Forbes L."/>
            <person name="Fu Q."/>
            <person name="Gubbala S."/>
            <person name="Hirani K."/>
            <person name="Jayaseelan J.C."/>
            <person name="Lara F."/>
            <person name="Munidasa M."/>
            <person name="Palculict T."/>
            <person name="Patil S."/>
            <person name="Pu L.-L."/>
            <person name="Saada N."/>
            <person name="Tang L."/>
            <person name="Weissenberger G."/>
            <person name="Zhu Y."/>
            <person name="Hemphill L."/>
            <person name="Shang Y."/>
            <person name="Youmans B."/>
            <person name="Ayvaz T."/>
            <person name="Ross M."/>
            <person name="Santibanez J."/>
            <person name="Aqrawi P."/>
            <person name="Gross S."/>
            <person name="Joshi V."/>
            <person name="Fowler G."/>
            <person name="Nazareth L."/>
            <person name="Reid J."/>
            <person name="Worley K."/>
            <person name="Petrosino J."/>
            <person name="Highlander S."/>
            <person name="Gibbs R."/>
        </authorList>
    </citation>
    <scope>NUCLEOTIDE SEQUENCE [LARGE SCALE GENOMIC DNA]</scope>
    <source>
        <strain>DSM 15952 / CCUG 50447 / LMG 22039 / TP 1.5</strain>
    </source>
</reference>
<reference key="2">
    <citation type="journal article" date="2017" name="Nature">
        <title>Type III CRISPR-Cas systems produce cyclic oligoadenylate second messengers.</title>
        <authorList>
            <person name="Niewoehner O."/>
            <person name="Garcia-Doval C."/>
            <person name="Rostoel J.T."/>
            <person name="Berk C."/>
            <person name="Schwede F."/>
            <person name="Bigler L."/>
            <person name="Hall J."/>
            <person name="Marraffini L.A."/>
            <person name="Jinek M."/>
        </authorList>
    </citation>
    <scope>FUNCTION IN PHAGE RESISTANCE</scope>
    <scope>FUNCTION AS AN ENDORIBONUCLEASE</scope>
    <scope>ACTIVITY REGULATION</scope>
    <scope>MUTAGENESIS OF GLN-116 AND 372-ARG-ASN-373</scope>
    <source>
        <strain>DSM 15952 / CCUG 50447 / LMG 22039 / TP 1.5</strain>
    </source>
</reference>
<protein>
    <recommendedName>
        <fullName>CRISPR system endoribonuclease Csm6</fullName>
        <ecNumber evidence="2">3.1.-.-</ecNumber>
    </recommendedName>
    <alternativeName>
        <fullName evidence="3">CRISPR type III-A associated protein Csm6</fullName>
    </alternativeName>
</protein>